<accession>A7BFV6</accession>
<accession>A0A653ZZB6</accession>
<name>SPT_SPHMU</name>
<feature type="chain" id="PRO_0000456078" description="Serine palmitoyltransferase">
    <location>
        <begin position="1"/>
        <end position="399"/>
    </location>
</feature>
<feature type="binding site" evidence="7">
    <location>
        <begin position="113"/>
        <end position="114"/>
    </location>
    <ligand>
        <name>pyridoxal 5'-phosphate</name>
        <dbReference type="ChEBI" id="CHEBI:597326"/>
    </ligand>
</feature>
<feature type="binding site" evidence="7">
    <location>
        <position position="213"/>
    </location>
    <ligand>
        <name>pyridoxal 5'-phosphate</name>
        <dbReference type="ChEBI" id="CHEBI:597326"/>
    </ligand>
</feature>
<feature type="binding site" evidence="1">
    <location>
        <position position="241"/>
    </location>
    <ligand>
        <name>pyridoxal 5'-phosphate</name>
        <dbReference type="ChEBI" id="CHEBI:597326"/>
    </ligand>
</feature>
<feature type="binding site" evidence="7">
    <location>
        <position position="243"/>
    </location>
    <ligand>
        <name>pyridoxal 5'-phosphate</name>
        <dbReference type="ChEBI" id="CHEBI:597326"/>
    </ligand>
</feature>
<feature type="modified residue" description="N6-(pyridoxal phosphate)lysine" evidence="1">
    <location>
        <position position="244"/>
    </location>
</feature>
<feature type="helix" evidence="13">
    <location>
        <begin position="4"/>
        <end position="10"/>
    </location>
</feature>
<feature type="helix" evidence="13">
    <location>
        <begin position="15"/>
        <end position="21"/>
    </location>
</feature>
<feature type="strand" evidence="13">
    <location>
        <begin position="35"/>
        <end position="41"/>
    </location>
</feature>
<feature type="strand" evidence="13">
    <location>
        <begin position="44"/>
        <end position="48"/>
    </location>
</feature>
<feature type="helix" evidence="13">
    <location>
        <begin position="57"/>
        <end position="59"/>
    </location>
</feature>
<feature type="helix" evidence="13">
    <location>
        <begin position="61"/>
        <end position="74"/>
    </location>
</feature>
<feature type="turn" evidence="13">
    <location>
        <begin position="82"/>
        <end position="85"/>
    </location>
</feature>
<feature type="helix" evidence="13">
    <location>
        <begin position="89"/>
        <end position="102"/>
    </location>
</feature>
<feature type="strand" evidence="13">
    <location>
        <begin position="105"/>
        <end position="112"/>
    </location>
</feature>
<feature type="helix" evidence="13">
    <location>
        <begin position="113"/>
        <end position="123"/>
    </location>
</feature>
<feature type="strand" evidence="13">
    <location>
        <begin position="130"/>
        <end position="134"/>
    </location>
</feature>
<feature type="helix" evidence="13">
    <location>
        <begin position="139"/>
        <end position="147"/>
    </location>
</feature>
<feature type="strand" evidence="13">
    <location>
        <begin position="148"/>
        <end position="155"/>
    </location>
</feature>
<feature type="helix" evidence="13">
    <location>
        <begin position="160"/>
        <end position="168"/>
    </location>
</feature>
<feature type="strand" evidence="13">
    <location>
        <begin position="172"/>
        <end position="174"/>
    </location>
</feature>
<feature type="strand" evidence="13">
    <location>
        <begin position="176"/>
        <end position="183"/>
    </location>
</feature>
<feature type="turn" evidence="13">
    <location>
        <begin position="185"/>
        <end position="187"/>
    </location>
</feature>
<feature type="helix" evidence="13">
    <location>
        <begin position="193"/>
        <end position="203"/>
    </location>
</feature>
<feature type="strand" evidence="13">
    <location>
        <begin position="206"/>
        <end position="210"/>
    </location>
</feature>
<feature type="turn" evidence="13">
    <location>
        <begin position="212"/>
        <end position="217"/>
    </location>
</feature>
<feature type="helix" evidence="13">
    <location>
        <begin position="220"/>
        <end position="222"/>
    </location>
</feature>
<feature type="helix" evidence="13">
    <location>
        <begin position="225"/>
        <end position="229"/>
    </location>
</feature>
<feature type="helix" evidence="13">
    <location>
        <begin position="232"/>
        <end position="234"/>
    </location>
</feature>
<feature type="strand" evidence="13">
    <location>
        <begin position="236"/>
        <end position="241"/>
    </location>
</feature>
<feature type="strand" evidence="13">
    <location>
        <begin position="251"/>
        <end position="255"/>
    </location>
</feature>
<feature type="helix" evidence="13">
    <location>
        <begin position="257"/>
        <end position="266"/>
    </location>
</feature>
<feature type="helix" evidence="13">
    <location>
        <begin position="268"/>
        <end position="271"/>
    </location>
</feature>
<feature type="strand" evidence="12">
    <location>
        <begin position="272"/>
        <end position="274"/>
    </location>
</feature>
<feature type="helix" evidence="13">
    <location>
        <begin position="278"/>
        <end position="293"/>
    </location>
</feature>
<feature type="helix" evidence="13">
    <location>
        <begin position="296"/>
        <end position="314"/>
    </location>
</feature>
<feature type="strand" evidence="13">
    <location>
        <begin position="323"/>
        <end position="330"/>
    </location>
</feature>
<feature type="helix" evidence="13">
    <location>
        <begin position="334"/>
        <end position="346"/>
    </location>
</feature>
<feature type="strand" evidence="13">
    <location>
        <begin position="352"/>
        <end position="354"/>
    </location>
</feature>
<feature type="turn" evidence="13">
    <location>
        <begin position="356"/>
        <end position="358"/>
    </location>
</feature>
<feature type="helix" evidence="13">
    <location>
        <begin position="361"/>
        <end position="363"/>
    </location>
</feature>
<feature type="strand" evidence="13">
    <location>
        <begin position="365"/>
        <end position="369"/>
    </location>
</feature>
<feature type="helix" evidence="13">
    <location>
        <begin position="376"/>
        <end position="393"/>
    </location>
</feature>
<sequence length="399" mass="43772">MSKGKLGEKISQFKIVEELKAKGLYAYFRPIQSKQDTEVKIDGRRVLMFGSNSYLGLTTDTRIIKAAQDALEKYGTGCAGSRFLNGTLDIHVELEEKLSAYVGKEAAILFSTGFQSNLGPLSCLMGRNDYILLDERDHASIIDGSRLSFSKVIKYGHNNMEDLRAKLSRLPEDSAKLICTDGIFSMEGDIVNLPELTSIANEFDAAVMVDDAHSLGVIGHKGAGTASHFGLNDDVDLIMGTFSKSLASLGGFVAGDADVIDFLKHNARSVMFSASMTPASVASTLKALEIIQNEPEHIEKLWKNTDYAKAQLLDHGFDLGATESPILPIFIRSNEKTFWVTKMLQDDGVFVNPVVSPAVPAEESLIRFSLMATHTYDQIDEAIEKMVKVFKQAEVETLI</sequence>
<protein>
    <recommendedName>
        <fullName evidence="4">Serine palmitoyltransferase</fullName>
        <shortName evidence="4">SPT</shortName>
        <ecNumber evidence="2">2.3.1.50</ecNumber>
    </recommendedName>
</protein>
<organism>
    <name type="scientific">Sphingobacterium multivorum</name>
    <dbReference type="NCBI Taxonomy" id="28454"/>
    <lineage>
        <taxon>Bacteria</taxon>
        <taxon>Pseudomonadati</taxon>
        <taxon>Bacteroidota</taxon>
        <taxon>Sphingobacteriia</taxon>
        <taxon>Sphingobacteriales</taxon>
        <taxon>Sphingobacteriaceae</taxon>
        <taxon>Sphingobacterium</taxon>
    </lineage>
</organism>
<evidence type="ECO:0000250" key="1">
    <source>
        <dbReference type="UniProtKB" id="Q93UV0"/>
    </source>
</evidence>
<evidence type="ECO:0000269" key="2">
    <source>
    </source>
</evidence>
<evidence type="ECO:0000269" key="3">
    <source>
    </source>
</evidence>
<evidence type="ECO:0000303" key="4">
    <source>
    </source>
</evidence>
<evidence type="ECO:0000305" key="5"/>
<evidence type="ECO:0000305" key="6">
    <source>
    </source>
</evidence>
<evidence type="ECO:0000305" key="7">
    <source>
    </source>
</evidence>
<evidence type="ECO:0000312" key="8">
    <source>
        <dbReference type="EMBL" id="QRQ60415.1"/>
    </source>
</evidence>
<evidence type="ECO:0000312" key="9">
    <source>
        <dbReference type="EMBL" id="SPZ86886.1"/>
    </source>
</evidence>
<evidence type="ECO:0000312" key="10">
    <source>
        <dbReference type="EMBL" id="VXC60648.1"/>
    </source>
</evidence>
<evidence type="ECO:0007744" key="11">
    <source>
        <dbReference type="PDB" id="3A2B"/>
    </source>
</evidence>
<evidence type="ECO:0007829" key="12">
    <source>
        <dbReference type="PDB" id="3A2B"/>
    </source>
</evidence>
<evidence type="ECO:0007829" key="13">
    <source>
        <dbReference type="PDB" id="8H1W"/>
    </source>
</evidence>
<gene>
    <name evidence="4" type="primary">spt</name>
    <name evidence="8" type="ORF">I6J33_20140</name>
    <name evidence="9" type="ORF">NCTC11343_02561</name>
    <name evidence="10" type="ORF">SPHINGO8BC_150128</name>
</gene>
<proteinExistence type="evidence at protein level"/>
<keyword id="KW-0002">3D-structure</keyword>
<keyword id="KW-0012">Acyltransferase</keyword>
<keyword id="KW-0997">Cell inner membrane</keyword>
<keyword id="KW-1003">Cell membrane</keyword>
<keyword id="KW-0963">Cytoplasm</keyword>
<keyword id="KW-0443">Lipid metabolism</keyword>
<keyword id="KW-0472">Membrane</keyword>
<keyword id="KW-0663">Pyridoxal phosphate</keyword>
<keyword id="KW-0808">Transferase</keyword>
<reference key="1">
    <citation type="journal article" date="2007" name="J. Bacteriol.">
        <title>Molecular characterization of membrane-associated soluble serine palmitoyltransferases from Sphingobacterium multivorum and Bdellovibrio stolpii.</title>
        <authorList>
            <person name="Ikushiro H."/>
            <person name="Islam M.M."/>
            <person name="Tojo H."/>
            <person name="Hayashi H."/>
        </authorList>
    </citation>
    <scope>NUCLEOTIDE SEQUENCE [GENOMIC DNA]</scope>
    <scope>FUNCTION</scope>
    <scope>CATALYTIC ACTIVITY</scope>
    <scope>COFACTOR</scope>
    <scope>BIOPHYSICOCHEMICAL PROPERTIES</scope>
    <scope>SUBUNIT</scope>
    <scope>SUBCELLULAR LOCATION</scope>
    <source>
        <strain>GTC97</strain>
    </source>
</reference>
<reference key="2">
    <citation type="submission" date="2018-06" db="EMBL/GenBank/DDBJ databases">
        <authorList>
            <consortium name="Pathogen Informatics"/>
            <person name="Doyle S."/>
        </authorList>
    </citation>
    <scope>NUCLEOTIDE SEQUENCE [LARGE SCALE GENOMIC DNA]</scope>
    <source>
        <strain>NCTC 11343</strain>
    </source>
</reference>
<reference key="3">
    <citation type="submission" date="2019-10" db="EMBL/GenBank/DDBJ databases">
        <authorList>
            <person name="Karimi E."/>
        </authorList>
    </citation>
    <scope>NUCLEOTIDE SEQUENCE [LARGE SCALE GENOMIC DNA]</scope>
    <source>
        <strain>Sphingobacterium sp. 8BC</strain>
    </source>
</reference>
<reference key="4">
    <citation type="submission" date="2021-02" db="EMBL/GenBank/DDBJ databases">
        <title>FDA dAtabase for Regulatory Grade micrObial Sequences (FDA-ARGOS): Supporting development and validation of Infectious Disease Dx tests.</title>
        <authorList>
            <person name="Sproer C."/>
            <person name="Gronow S."/>
            <person name="Severitt S."/>
            <person name="Schroder I."/>
            <person name="Tallon L."/>
            <person name="Sadzewicz L."/>
            <person name="Zhao X."/>
            <person name="Boylan J."/>
            <person name="Ott S."/>
            <person name="Bowen H."/>
            <person name="Vavikolanu K."/>
            <person name="Mehta A."/>
            <person name="Aluvathingal J."/>
            <person name="Nadendla S."/>
            <person name="Lowell S."/>
            <person name="Myers T."/>
            <person name="Yan Y."/>
            <person name="Sichtig H."/>
        </authorList>
    </citation>
    <scope>NUCLEOTIDE SEQUENCE [LARGE SCALE GENOMIC DNA]</scope>
    <source>
        <strain>ATCC 33613 / DSM 11691 / FDAARGOS_1203</strain>
    </source>
</reference>
<reference evidence="11" key="5">
    <citation type="journal article" date="2009" name="J. Biochem.">
        <title>Structural insights into the enzymatic mechanism of serine palmitoyltransferase from Sphingobacterium multivorum.</title>
        <authorList>
            <person name="Ikushiro H."/>
            <person name="Islam M.M."/>
            <person name="Okamoto A."/>
            <person name="Hoseki J."/>
            <person name="Murakawa T."/>
            <person name="Fujii S."/>
            <person name="Miyahara I."/>
            <person name="Hayashi H."/>
        </authorList>
    </citation>
    <scope>X-RAY CRYSTALLOGRAPHY (2.30 ANGSTROMS) OF 2-399 IN COMPLEX WITH PLP-BOUND SERINE</scope>
    <scope>SUBUNIT</scope>
    <source>
        <strain>GTC97</strain>
    </source>
</reference>
<comment type="function">
    <text evidence="2">Catalyzes the condensation of L-serine with palmitoyl-CoA (hexadecanoyl-CoA) to produce 3-oxosphinganine (PubMed:17557831). Exhibits a broad substrate specificity concerning the chain length and the degree of unsaturation of acyl-CoA (PubMed:17557831).</text>
</comment>
<comment type="catalytic activity">
    <reaction evidence="2">
        <text>L-serine + hexadecanoyl-CoA + H(+) = 3-oxosphinganine + CO2 + CoA</text>
        <dbReference type="Rhea" id="RHEA:14761"/>
        <dbReference type="ChEBI" id="CHEBI:15378"/>
        <dbReference type="ChEBI" id="CHEBI:16526"/>
        <dbReference type="ChEBI" id="CHEBI:33384"/>
        <dbReference type="ChEBI" id="CHEBI:57287"/>
        <dbReference type="ChEBI" id="CHEBI:57379"/>
        <dbReference type="ChEBI" id="CHEBI:58299"/>
        <dbReference type="EC" id="2.3.1.50"/>
    </reaction>
    <physiologicalReaction direction="left-to-right" evidence="2">
        <dbReference type="Rhea" id="RHEA:14762"/>
    </physiologicalReaction>
</comment>
<comment type="cofactor">
    <cofactor evidence="2">
        <name>pyridoxal 5'-phosphate</name>
        <dbReference type="ChEBI" id="CHEBI:597326"/>
    </cofactor>
</comment>
<comment type="biophysicochemical properties">
    <kinetics>
        <KM evidence="2">4.8 mM for L-serine</KM>
        <KM evidence="2">0.1 mM for palmitoyl-CoA</KM>
        <text evidence="2">kcat is 0.12 sec(-1).</text>
    </kinetics>
    <phDependence>
        <text evidence="2">Optimum pH is 7.4 to 8.0.</text>
    </phDependence>
</comment>
<comment type="pathway">
    <text evidence="6">Lipid metabolism; sphingolipid metabolism.</text>
</comment>
<comment type="subunit">
    <text evidence="2 3">Homodimer.</text>
</comment>
<comment type="subcellular location">
    <subcellularLocation>
        <location evidence="2">Cytoplasm</location>
    </subcellularLocation>
    <subcellularLocation>
        <location evidence="2">Cell inner membrane</location>
        <topology evidence="2">Peripheral membrane protein</topology>
    </subcellularLocation>
    <text evidence="2">Distributed mainly near the inner membrane of the cell.</text>
</comment>
<comment type="similarity">
    <text evidence="5">Belongs to the class-II pyridoxal-phosphate-dependent aminotransferase family.</text>
</comment>
<dbReference type="EC" id="2.3.1.50" evidence="2"/>
<dbReference type="EMBL" id="AB259214">
    <property type="protein sequence ID" value="BAF73751.1"/>
    <property type="molecule type" value="Genomic_DNA"/>
</dbReference>
<dbReference type="EMBL" id="UAUU01000009">
    <property type="protein sequence ID" value="SPZ86886.1"/>
    <property type="molecule type" value="Genomic_DNA"/>
</dbReference>
<dbReference type="EMBL" id="CABWMV010000007">
    <property type="protein sequence ID" value="VXC60648.1"/>
    <property type="molecule type" value="Genomic_DNA"/>
</dbReference>
<dbReference type="EMBL" id="CP069793">
    <property type="protein sequence ID" value="QRQ60415.1"/>
    <property type="molecule type" value="Genomic_DNA"/>
</dbReference>
<dbReference type="RefSeq" id="WP_046672730.1">
    <property type="nucleotide sequence ID" value="NZ_UGYX01000002.1"/>
</dbReference>
<dbReference type="PDB" id="3A2B">
    <property type="method" value="X-ray"/>
    <property type="resolution" value="2.30 A"/>
    <property type="chains" value="A=2-399"/>
</dbReference>
<dbReference type="PDB" id="8GUH">
    <property type="method" value="X-ray"/>
    <property type="resolution" value="1.65 A"/>
    <property type="chains" value="A=1-399"/>
</dbReference>
<dbReference type="PDB" id="8H1Q">
    <property type="method" value="X-ray"/>
    <property type="resolution" value="1.50 A"/>
    <property type="chains" value="A=1-399"/>
</dbReference>
<dbReference type="PDB" id="8H1W">
    <property type="method" value="X-ray"/>
    <property type="resolution" value="1.40 A"/>
    <property type="chains" value="A=1-399"/>
</dbReference>
<dbReference type="PDB" id="8H1Y">
    <property type="method" value="X-ray"/>
    <property type="resolution" value="1.55 A"/>
    <property type="chains" value="A=1-399"/>
</dbReference>
<dbReference type="PDB" id="8H20">
    <property type="method" value="X-ray"/>
    <property type="resolution" value="1.45 A"/>
    <property type="chains" value="A=1-399"/>
</dbReference>
<dbReference type="PDB" id="8H21">
    <property type="method" value="X-ray"/>
    <property type="resolution" value="1.54 A"/>
    <property type="chains" value="A=1-399"/>
</dbReference>
<dbReference type="PDB" id="8H29">
    <property type="method" value="X-ray"/>
    <property type="resolution" value="1.45 A"/>
    <property type="chains" value="A=1-399"/>
</dbReference>
<dbReference type="PDB" id="8IYP">
    <property type="method" value="X-ray"/>
    <property type="resolution" value="1.65 A"/>
    <property type="chains" value="A=1-399"/>
</dbReference>
<dbReference type="PDB" id="8IYT">
    <property type="method" value="X-ray"/>
    <property type="resolution" value="1.70 A"/>
    <property type="chains" value="A=1-399"/>
</dbReference>
<dbReference type="PDBsum" id="3A2B"/>
<dbReference type="PDBsum" id="8GUH"/>
<dbReference type="PDBsum" id="8H1Q"/>
<dbReference type="PDBsum" id="8H1W"/>
<dbReference type="PDBsum" id="8H1Y"/>
<dbReference type="PDBsum" id="8H20"/>
<dbReference type="PDBsum" id="8H21"/>
<dbReference type="PDBsum" id="8H29"/>
<dbReference type="PDBsum" id="8IYP"/>
<dbReference type="PDBsum" id="8IYT"/>
<dbReference type="SMR" id="A7BFV6"/>
<dbReference type="GeneID" id="97182514"/>
<dbReference type="BRENDA" id="2.3.1.50">
    <property type="organism ID" value="2288"/>
</dbReference>
<dbReference type="UniPathway" id="UPA00222"/>
<dbReference type="EvolutionaryTrace" id="A7BFV6"/>
<dbReference type="PRO" id="PR:A7BFV6"/>
<dbReference type="Proteomes" id="UP000251241">
    <property type="component" value="Unassembled WGS sequence"/>
</dbReference>
<dbReference type="Proteomes" id="UP000432350">
    <property type="component" value="Unassembled WGS sequence"/>
</dbReference>
<dbReference type="GO" id="GO:0005737">
    <property type="term" value="C:cytoplasm"/>
    <property type="evidence" value="ECO:0007669"/>
    <property type="project" value="UniProtKB-SubCell"/>
</dbReference>
<dbReference type="GO" id="GO:0005886">
    <property type="term" value="C:plasma membrane"/>
    <property type="evidence" value="ECO:0007669"/>
    <property type="project" value="UniProtKB-SubCell"/>
</dbReference>
<dbReference type="GO" id="GO:0008710">
    <property type="term" value="F:8-amino-7-oxononanoate synthase activity"/>
    <property type="evidence" value="ECO:0007669"/>
    <property type="project" value="UniProtKB-EC"/>
</dbReference>
<dbReference type="GO" id="GO:0030170">
    <property type="term" value="F:pyridoxal phosphate binding"/>
    <property type="evidence" value="ECO:0007669"/>
    <property type="project" value="InterPro"/>
</dbReference>
<dbReference type="GO" id="GO:0004758">
    <property type="term" value="F:serine C-palmitoyltransferase activity"/>
    <property type="evidence" value="ECO:0007669"/>
    <property type="project" value="UniProtKB-EC"/>
</dbReference>
<dbReference type="GO" id="GO:0009058">
    <property type="term" value="P:biosynthetic process"/>
    <property type="evidence" value="ECO:0007669"/>
    <property type="project" value="InterPro"/>
</dbReference>
<dbReference type="GO" id="GO:0006665">
    <property type="term" value="P:sphingolipid metabolic process"/>
    <property type="evidence" value="ECO:0007669"/>
    <property type="project" value="UniProtKB-UniPathway"/>
</dbReference>
<dbReference type="CDD" id="cd06454">
    <property type="entry name" value="KBL_like"/>
    <property type="match status" value="1"/>
</dbReference>
<dbReference type="Gene3D" id="3.90.1150.10">
    <property type="entry name" value="Aspartate Aminotransferase, domain 1"/>
    <property type="match status" value="1"/>
</dbReference>
<dbReference type="Gene3D" id="3.40.640.10">
    <property type="entry name" value="Type I PLP-dependent aspartate aminotransferase-like (Major domain)"/>
    <property type="match status" value="1"/>
</dbReference>
<dbReference type="InterPro" id="IPR001917">
    <property type="entry name" value="Aminotrans_II_pyridoxalP_BS"/>
</dbReference>
<dbReference type="InterPro" id="IPR004839">
    <property type="entry name" value="Aminotransferase_I/II_large"/>
</dbReference>
<dbReference type="InterPro" id="IPR050087">
    <property type="entry name" value="AON_synthase_class-II"/>
</dbReference>
<dbReference type="InterPro" id="IPR015424">
    <property type="entry name" value="PyrdxlP-dep_Trfase"/>
</dbReference>
<dbReference type="InterPro" id="IPR015421">
    <property type="entry name" value="PyrdxlP-dep_Trfase_major"/>
</dbReference>
<dbReference type="InterPro" id="IPR015422">
    <property type="entry name" value="PyrdxlP-dep_Trfase_small"/>
</dbReference>
<dbReference type="NCBIfam" id="NF047600">
    <property type="entry name" value="SerpalmtaseCFB"/>
    <property type="match status" value="1"/>
</dbReference>
<dbReference type="PANTHER" id="PTHR13693">
    <property type="entry name" value="CLASS II AMINOTRANSFERASE/8-AMINO-7-OXONONANOATE SYNTHASE"/>
    <property type="match status" value="1"/>
</dbReference>
<dbReference type="PANTHER" id="PTHR13693:SF3">
    <property type="entry name" value="LD36009P"/>
    <property type="match status" value="1"/>
</dbReference>
<dbReference type="Pfam" id="PF00155">
    <property type="entry name" value="Aminotran_1_2"/>
    <property type="match status" value="1"/>
</dbReference>
<dbReference type="SUPFAM" id="SSF53383">
    <property type="entry name" value="PLP-dependent transferases"/>
    <property type="match status" value="1"/>
</dbReference>
<dbReference type="PROSITE" id="PS00599">
    <property type="entry name" value="AA_TRANSFER_CLASS_2"/>
    <property type="match status" value="1"/>
</dbReference>